<sequence>MGSTATETEELENTTFKYLIGEQTEKMWQRLKGILRCLVKQLEKGDVNVIDLKKNIEYAASVLEAVYIDETRRLLDTDDELSDIQSDSVPSEVRDWLASTFTRKMGMMKKKSEEKPRFRSIVHVVQAGIFVERMYRKSYHMVGLAYPEAVIVTLKDVDKWSFDVFALNEASGEHSLKFMIYELFTRYDLINRFKIPVSCLIAFAEALEVGYSKYKNPYHNLIHAADVTQTVHYIMLHTGIMHWLTELEILAMVFAAAIHDYEHTGTTNNFHIQTRSDVAILYNDRSVLENHHVSAAYRLMQEEEMNVLINLSKDDWRDLRNLVIEMVLSTDMSGHFQQIKNIRNSLQQPEGLDKAKTMSLILHAADISHPAKSWKLHHRWTMALMEEFFLQGDKEAELGLPFSPLCDRKSTMVAQSQIGFIDFIVEPTFSLLTDSTEKIIIPLIEEDSKTKTPSYGASRRSNMKGTTNDGTYSPDYSLASVDLKSFKNSLVDIIQQNKERWKELAAQGEPDPHKNSDLVNAEEKHAETHS</sequence>
<evidence type="ECO:0000250" key="1">
    <source>
        <dbReference type="UniProtKB" id="O76083"/>
    </source>
</evidence>
<evidence type="ECO:0000250" key="2">
    <source>
        <dbReference type="UniProtKB" id="P54750"/>
    </source>
</evidence>
<evidence type="ECO:0000250" key="3">
    <source>
        <dbReference type="UniProtKB" id="Q01064"/>
    </source>
</evidence>
<evidence type="ECO:0000250" key="4">
    <source>
        <dbReference type="UniProtKB" id="Q61481"/>
    </source>
</evidence>
<evidence type="ECO:0000255" key="5">
    <source>
        <dbReference type="PROSITE-ProRule" id="PRU01192"/>
    </source>
</evidence>
<evidence type="ECO:0000256" key="6">
    <source>
        <dbReference type="SAM" id="MobiDB-lite"/>
    </source>
</evidence>
<evidence type="ECO:0000269" key="7">
    <source>
    </source>
</evidence>
<evidence type="ECO:0000269" key="8">
    <source>
    </source>
</evidence>
<evidence type="ECO:0000303" key="9">
    <source>
    </source>
</evidence>
<evidence type="ECO:0000303" key="10">
    <source>
    </source>
</evidence>
<evidence type="ECO:0000303" key="11">
    <source>
    </source>
</evidence>
<evidence type="ECO:0000303" key="12">
    <source ref="3"/>
</evidence>
<evidence type="ECO:0000305" key="13"/>
<evidence type="ECO:0000305" key="14">
    <source>
    </source>
</evidence>
<keyword id="KW-0025">Alternative splicing</keyword>
<keyword id="KW-0112">Calmodulin-binding</keyword>
<keyword id="KW-0114">cAMP</keyword>
<keyword id="KW-0140">cGMP</keyword>
<keyword id="KW-0903">Direct protein sequencing</keyword>
<keyword id="KW-0378">Hydrolase</keyword>
<keyword id="KW-0460">Magnesium</keyword>
<keyword id="KW-0479">Metal-binding</keyword>
<keyword id="KW-1185">Reference proteome</keyword>
<keyword id="KW-0862">Zinc</keyword>
<reference key="1">
    <citation type="journal article" date="1993" name="J. Biol. Chem.">
        <title>Molecular cloning of a cDNA encoding the '61-kDa' calmodulin-stimulated cyclic nucleotide phosphodiesterase. Tissue-specific expression of structurally related isoforms.</title>
        <authorList>
            <person name="Sonnenburg W.K."/>
            <person name="Seger D."/>
            <person name="Beavo J.A."/>
        </authorList>
    </citation>
    <scope>NUCLEOTIDE SEQUENCE [MRNA]</scope>
    <source>
        <tissue>Brain</tissue>
    </source>
</reference>
<reference key="2">
    <citation type="journal article" date="1995" name="J. Biol. Chem.">
        <title>Identification of inhibitory and calmodulin-binding domains of the PDE1A1 and PDE1A2 calmodulin-stimulated cyclic nucleotide phosphodiesterases.</title>
        <authorList>
            <person name="Sonnenburg W.K."/>
            <person name="Seger D."/>
            <person name="Kwak K.S."/>
            <person name="Huang J."/>
            <person name="Charbonneau H."/>
            <person name="Beavo J.A."/>
        </authorList>
    </citation>
    <scope>NUCLEOTIDE SEQUENCE [MRNA] (ISOFORM 1)</scope>
    <scope>FUNCTION</scope>
    <scope>CATALYTIC ACTIVITY</scope>
    <scope>ACTIVITY REGULATION</scope>
    <scope>SUBUNIT</scope>
    <scope>REGION</scope>
    <source>
        <tissue>Lung</tissue>
    </source>
</reference>
<reference key="3">
    <citation type="submission" date="2006-09" db="EMBL/GenBank/DDBJ databases">
        <authorList>
            <consortium name="NIH - Mammalian Gene Collection (MGC) project"/>
        </authorList>
    </citation>
    <scope>NUCLEOTIDE SEQUENCE [LARGE SCALE MRNA] (ISOFORM 1)</scope>
    <source>
        <strain>Hereford</strain>
        <tissue>Hippocampus</tissue>
    </source>
</reference>
<reference key="4">
    <citation type="journal article" date="1991" name="Biochemistry">
        <title>Evidence for domain organization within the 61-kDa calmodulin-dependent cyclic nucleotide phosphodiesterase from bovine brain.</title>
        <authorList>
            <person name="Charbonneau H."/>
            <person name="Kumar S."/>
            <person name="Novack J.P."/>
            <person name="Blumenthal D.K."/>
            <person name="Griffin P.R."/>
            <person name="Shabanowitz J."/>
            <person name="Hunt D.F."/>
            <person name="Beavo J.A."/>
            <person name="Walsh K.A."/>
        </authorList>
    </citation>
    <scope>PROTEIN SEQUENCE OF 2-530 (ISOFORM 2)</scope>
    <scope>REGION</scope>
    <source>
        <tissue>Brain</tissue>
    </source>
</reference>
<reference key="5">
    <citation type="journal article" date="1986" name="Proc. Natl. Acad. Sci. U.S.A.">
        <title>Identification of a conserved domain among cyclic nucleotide phosphodiesterases from diverse species.</title>
        <authorList>
            <person name="Charbonneau H."/>
            <person name="Beier N."/>
            <person name="Walsh K.A."/>
            <person name="Beavo J.A."/>
        </authorList>
    </citation>
    <scope>PROTEIN SEQUENCE OF 194-427</scope>
    <source>
        <tissue>Brain</tissue>
    </source>
</reference>
<reference key="6">
    <citation type="journal article" date="1991" name="Biochemistry">
        <title>Sequence comparison of the 63-, 61-, and 59-kDa calmodulin-dependent cyclic nucleotide phosphodiesterases.</title>
        <authorList>
            <person name="Novack J.P."/>
            <person name="Charbonneau H."/>
            <person name="Bentley J.K."/>
            <person name="Walsh K.A."/>
            <person name="Beavo J.A."/>
        </authorList>
    </citation>
    <scope>PARTIAL PROTEIN SEQUENCE</scope>
    <source>
        <tissue>Brain</tissue>
    </source>
</reference>
<proteinExistence type="evidence at protein level"/>
<feature type="chain" id="PRO_0000198784" description="Dual specificity calcium/calmodulin-dependent 3',5'-cyclic nucleotide phosphodiesterase 1A">
    <location>
        <begin position="1"/>
        <end position="530"/>
    </location>
</feature>
<feature type="domain" description="PDEase" evidence="5">
    <location>
        <begin position="142"/>
        <end position="508"/>
    </location>
</feature>
<feature type="region of interest" description="Calmodulin-binding" evidence="7">
    <location>
        <begin position="24"/>
        <end position="44"/>
    </location>
</feature>
<feature type="region of interest" description="Calmodulin-binding" evidence="8">
    <location>
        <begin position="114"/>
        <end position="137"/>
    </location>
</feature>
<feature type="region of interest" description="Disordered" evidence="6">
    <location>
        <begin position="450"/>
        <end position="471"/>
    </location>
</feature>
<feature type="region of interest" description="Disordered" evidence="6">
    <location>
        <begin position="502"/>
        <end position="530"/>
    </location>
</feature>
<feature type="compositionally biased region" description="Polar residues" evidence="6">
    <location>
        <begin position="451"/>
        <end position="471"/>
    </location>
</feature>
<feature type="compositionally biased region" description="Basic and acidic residues" evidence="6">
    <location>
        <begin position="510"/>
        <end position="530"/>
    </location>
</feature>
<feature type="active site" description="Proton donor" evidence="1">
    <location>
        <position position="219"/>
    </location>
</feature>
<feature type="binding site" evidence="3">
    <location>
        <position position="223"/>
    </location>
    <ligand>
        <name>Zn(2+)</name>
        <dbReference type="ChEBI" id="CHEBI:29105"/>
    </ligand>
</feature>
<feature type="binding site" evidence="3">
    <location>
        <position position="259"/>
    </location>
    <ligand>
        <name>Zn(2+)</name>
        <dbReference type="ChEBI" id="CHEBI:29105"/>
    </ligand>
</feature>
<feature type="binding site" evidence="3">
    <location>
        <position position="260"/>
    </location>
    <ligand>
        <name>Mg(2+)</name>
        <dbReference type="ChEBI" id="CHEBI:18420"/>
    </ligand>
</feature>
<feature type="binding site" evidence="3">
    <location>
        <position position="260"/>
    </location>
    <ligand>
        <name>Zn(2+)</name>
        <dbReference type="ChEBI" id="CHEBI:29105"/>
    </ligand>
</feature>
<feature type="binding site" evidence="3">
    <location>
        <position position="366"/>
    </location>
    <ligand>
        <name>Zn(2+)</name>
        <dbReference type="ChEBI" id="CHEBI:29105"/>
    </ligand>
</feature>
<feature type="splice variant" id="VSP_004546" description="In isoform 1." evidence="11 12">
    <original>MGSTATETEELENTTFKYLIGEQTEKMWQRLKGI</original>
    <variation>MDDHVTIRRKHLQRPIFR</variation>
    <location>
        <begin position="1"/>
        <end position="34"/>
    </location>
</feature>
<feature type="sequence conflict" description="In Ref. 5; AA sequence." evidence="13" ref="5">
    <original>H</original>
    <variation>G</variation>
    <location>
        <position position="237"/>
    </location>
</feature>
<feature type="sequence conflict" description="In Ref. 5; AA sequence." evidence="13" ref="5">
    <original>N</original>
    <variation>W</variation>
    <location>
        <position position="321"/>
    </location>
</feature>
<protein>
    <recommendedName>
        <fullName evidence="14">Dual specificity calcium/calmodulin-dependent 3',5'-cyclic nucleotide phosphodiesterase 1A</fullName>
        <shortName>Cam-PDE 1A</shortName>
        <ecNumber evidence="8">3.1.4.17</ecNumber>
    </recommendedName>
    <alternativeName>
        <fullName evidence="9">61 kDa Cam-PDE</fullName>
    </alternativeName>
</protein>
<dbReference type="EC" id="3.1.4.17" evidence="8"/>
<dbReference type="EMBL" id="M90358">
    <property type="protein sequence ID" value="AAA74560.1"/>
    <property type="molecule type" value="mRNA"/>
</dbReference>
<dbReference type="EMBL" id="L34069">
    <property type="protein sequence ID" value="AAA92555.1"/>
    <property type="molecule type" value="mRNA"/>
</dbReference>
<dbReference type="EMBL" id="BC123449">
    <property type="protein sequence ID" value="AAI23450.1"/>
    <property type="molecule type" value="mRNA"/>
</dbReference>
<dbReference type="PIR" id="A45334">
    <property type="entry name" value="A45334"/>
</dbReference>
<dbReference type="RefSeq" id="NP_776839.1">
    <molecule id="P14100-2"/>
    <property type="nucleotide sequence ID" value="NM_174414.3"/>
</dbReference>
<dbReference type="RefSeq" id="XP_010800147.1">
    <property type="nucleotide sequence ID" value="XM_010801845.1"/>
</dbReference>
<dbReference type="RefSeq" id="XP_024854622.1">
    <molecule id="P14100-2"/>
    <property type="nucleotide sequence ID" value="XM_024998854.2"/>
</dbReference>
<dbReference type="SMR" id="P14100"/>
<dbReference type="BioGRID" id="159260">
    <property type="interactions" value="2"/>
</dbReference>
<dbReference type="FunCoup" id="P14100">
    <property type="interactions" value="184"/>
</dbReference>
<dbReference type="IntAct" id="P14100">
    <property type="interactions" value="3"/>
</dbReference>
<dbReference type="STRING" id="9913.ENSBTAP00000051204"/>
<dbReference type="BindingDB" id="P14100"/>
<dbReference type="ChEMBL" id="CHEMBL3774"/>
<dbReference type="DrugCentral" id="P14100"/>
<dbReference type="iPTMnet" id="P14100"/>
<dbReference type="PaxDb" id="9913-ENSBTAP00000051204"/>
<dbReference type="GeneID" id="281969"/>
<dbReference type="KEGG" id="bta:281969"/>
<dbReference type="CTD" id="5136"/>
<dbReference type="VEuPathDB" id="HostDB:ENSBTAG00000012100"/>
<dbReference type="eggNOG" id="KOG3688">
    <property type="taxonomic scope" value="Eukaryota"/>
</dbReference>
<dbReference type="HOGENOM" id="CLU_005940_1_3_1"/>
<dbReference type="InParanoid" id="P14100"/>
<dbReference type="OMA" id="MSHPPAE"/>
<dbReference type="OrthoDB" id="189220at2759"/>
<dbReference type="TreeFam" id="TF314638"/>
<dbReference type="Reactome" id="R-BTA-111957">
    <property type="pathway name" value="Cam-PDE 1 activation"/>
</dbReference>
<dbReference type="Reactome" id="R-BTA-418457">
    <property type="pathway name" value="cGMP effects"/>
</dbReference>
<dbReference type="Reactome" id="R-BTA-418555">
    <property type="pathway name" value="G alpha (s) signalling events"/>
</dbReference>
<dbReference type="SABIO-RK" id="P14100"/>
<dbReference type="Proteomes" id="UP000009136">
    <property type="component" value="Chromosome 2"/>
</dbReference>
<dbReference type="Bgee" id="ENSBTAG00000012100">
    <property type="expression patterns" value="Expressed in occipital lobe and 96 other cell types or tissues"/>
</dbReference>
<dbReference type="GO" id="GO:0043025">
    <property type="term" value="C:neuronal cell body"/>
    <property type="evidence" value="ECO:0000318"/>
    <property type="project" value="GO_Central"/>
</dbReference>
<dbReference type="GO" id="GO:0047555">
    <property type="term" value="F:3',5'-cyclic-GMP phosphodiesterase activity"/>
    <property type="evidence" value="ECO:0000314"/>
    <property type="project" value="UniProtKB"/>
</dbReference>
<dbReference type="GO" id="GO:0005516">
    <property type="term" value="F:calmodulin binding"/>
    <property type="evidence" value="ECO:0007669"/>
    <property type="project" value="UniProtKB-KW"/>
</dbReference>
<dbReference type="GO" id="GO:0048101">
    <property type="term" value="F:calmodulin-activated 3',5'-cyclic-GMP phosphodiesterase activity"/>
    <property type="evidence" value="ECO:0000314"/>
    <property type="project" value="MGI"/>
</dbReference>
<dbReference type="GO" id="GO:0004117">
    <property type="term" value="F:calmodulin-activated dual specificity 3',5'-cyclic-GMP, 3',5'-cyclic-AMP phosphodiesterase activity"/>
    <property type="evidence" value="ECO:0000314"/>
    <property type="project" value="MGI"/>
</dbReference>
<dbReference type="GO" id="GO:0046872">
    <property type="term" value="F:metal ion binding"/>
    <property type="evidence" value="ECO:0007669"/>
    <property type="project" value="UniProtKB-KW"/>
</dbReference>
<dbReference type="GO" id="GO:0019933">
    <property type="term" value="P:cAMP-mediated signaling"/>
    <property type="evidence" value="ECO:0000318"/>
    <property type="project" value="GO_Central"/>
</dbReference>
<dbReference type="CDD" id="cd00077">
    <property type="entry name" value="HDc"/>
    <property type="match status" value="1"/>
</dbReference>
<dbReference type="FunFam" id="1.10.1300.10:FF:000011">
    <property type="entry name" value="Phosphodiesterase"/>
    <property type="match status" value="1"/>
</dbReference>
<dbReference type="Gene3D" id="1.10.1300.10">
    <property type="entry name" value="3'5'-cyclic nucleotide phosphodiesterase, catalytic domain"/>
    <property type="match status" value="1"/>
</dbReference>
<dbReference type="InterPro" id="IPR003607">
    <property type="entry name" value="HD/PDEase_dom"/>
</dbReference>
<dbReference type="InterPro" id="IPR023088">
    <property type="entry name" value="PDEase"/>
</dbReference>
<dbReference type="InterPro" id="IPR002073">
    <property type="entry name" value="PDEase_catalytic_dom"/>
</dbReference>
<dbReference type="InterPro" id="IPR036971">
    <property type="entry name" value="PDEase_catalytic_dom_sf"/>
</dbReference>
<dbReference type="InterPro" id="IPR023174">
    <property type="entry name" value="PDEase_CS"/>
</dbReference>
<dbReference type="InterPro" id="IPR013706">
    <property type="entry name" value="PDEase_N"/>
</dbReference>
<dbReference type="PANTHER" id="PTHR11347">
    <property type="entry name" value="CYCLIC NUCLEOTIDE PHOSPHODIESTERASE"/>
    <property type="match status" value="1"/>
</dbReference>
<dbReference type="Pfam" id="PF00233">
    <property type="entry name" value="PDEase_I"/>
    <property type="match status" value="1"/>
</dbReference>
<dbReference type="Pfam" id="PF08499">
    <property type="entry name" value="PDEase_I_N"/>
    <property type="match status" value="1"/>
</dbReference>
<dbReference type="PRINTS" id="PR00387">
    <property type="entry name" value="PDIESTERASE1"/>
</dbReference>
<dbReference type="SMART" id="SM00471">
    <property type="entry name" value="HDc"/>
    <property type="match status" value="1"/>
</dbReference>
<dbReference type="SUPFAM" id="SSF109604">
    <property type="entry name" value="HD-domain/PDEase-like"/>
    <property type="match status" value="1"/>
</dbReference>
<dbReference type="PROSITE" id="PS00126">
    <property type="entry name" value="PDEASE_I_1"/>
    <property type="match status" value="1"/>
</dbReference>
<dbReference type="PROSITE" id="PS51845">
    <property type="entry name" value="PDEASE_I_2"/>
    <property type="match status" value="1"/>
</dbReference>
<accession>P14100</accession>
<accession>Q08E30</accession>
<accession>Q28063</accession>
<organism>
    <name type="scientific">Bos taurus</name>
    <name type="common">Bovine</name>
    <dbReference type="NCBI Taxonomy" id="9913"/>
    <lineage>
        <taxon>Eukaryota</taxon>
        <taxon>Metazoa</taxon>
        <taxon>Chordata</taxon>
        <taxon>Craniata</taxon>
        <taxon>Vertebrata</taxon>
        <taxon>Euteleostomi</taxon>
        <taxon>Mammalia</taxon>
        <taxon>Eutheria</taxon>
        <taxon>Laurasiatheria</taxon>
        <taxon>Artiodactyla</taxon>
        <taxon>Ruminantia</taxon>
        <taxon>Pecora</taxon>
        <taxon>Bovidae</taxon>
        <taxon>Bovinae</taxon>
        <taxon>Bos</taxon>
    </lineage>
</organism>
<name>PDE1A_BOVIN</name>
<comment type="function">
    <text evidence="8">Calcium/calmodulin-dependent cyclic nucleotide phosphodiesterase with a dual specificity for the second messengers cGMP and cAMP, which are key regulators of many important physiological processes. Has a higher efficiency with cGMP compared to cAMP.</text>
</comment>
<comment type="catalytic activity">
    <molecule>Dual specificity calcium/calmodulin-dependent 3',5'-cyclic nucleotide phosphodiesterase 1A</molecule>
    <reaction evidence="8">
        <text>a nucleoside 3',5'-cyclic phosphate + H2O = a nucleoside 5'-phosphate + H(+)</text>
        <dbReference type="Rhea" id="RHEA:14653"/>
        <dbReference type="ChEBI" id="CHEBI:15377"/>
        <dbReference type="ChEBI" id="CHEBI:15378"/>
        <dbReference type="ChEBI" id="CHEBI:57867"/>
        <dbReference type="ChEBI" id="CHEBI:58464"/>
        <dbReference type="EC" id="3.1.4.17"/>
    </reaction>
    <physiologicalReaction direction="left-to-right" evidence="14">
        <dbReference type="Rhea" id="RHEA:14654"/>
    </physiologicalReaction>
</comment>
<comment type="catalytic activity">
    <molecule>Isoform 1</molecule>
    <reaction evidence="8">
        <text>a nucleoside 3',5'-cyclic phosphate + H2O = a nucleoside 5'-phosphate + H(+)</text>
        <dbReference type="Rhea" id="RHEA:14653"/>
        <dbReference type="ChEBI" id="CHEBI:15377"/>
        <dbReference type="ChEBI" id="CHEBI:15378"/>
        <dbReference type="ChEBI" id="CHEBI:57867"/>
        <dbReference type="ChEBI" id="CHEBI:58464"/>
        <dbReference type="EC" id="3.1.4.17"/>
    </reaction>
    <physiologicalReaction direction="left-to-right" evidence="14">
        <dbReference type="Rhea" id="RHEA:14654"/>
    </physiologicalReaction>
</comment>
<comment type="catalytic activity">
    <molecule>Dual specificity calcium/calmodulin-dependent 3',5'-cyclic nucleotide phosphodiesterase 1A</molecule>
    <reaction evidence="8">
        <text>3',5'-cyclic GMP + H2O = GMP + H(+)</text>
        <dbReference type="Rhea" id="RHEA:16957"/>
        <dbReference type="ChEBI" id="CHEBI:15377"/>
        <dbReference type="ChEBI" id="CHEBI:15378"/>
        <dbReference type="ChEBI" id="CHEBI:57746"/>
        <dbReference type="ChEBI" id="CHEBI:58115"/>
    </reaction>
    <physiologicalReaction direction="left-to-right" evidence="14">
        <dbReference type="Rhea" id="RHEA:16958"/>
    </physiologicalReaction>
</comment>
<comment type="catalytic activity">
    <molecule>Isoform 1</molecule>
    <reaction evidence="8">
        <text>3',5'-cyclic GMP + H2O = GMP + H(+)</text>
        <dbReference type="Rhea" id="RHEA:16957"/>
        <dbReference type="ChEBI" id="CHEBI:15377"/>
        <dbReference type="ChEBI" id="CHEBI:15378"/>
        <dbReference type="ChEBI" id="CHEBI:57746"/>
        <dbReference type="ChEBI" id="CHEBI:58115"/>
    </reaction>
    <physiologicalReaction direction="left-to-right" evidence="14">
        <dbReference type="Rhea" id="RHEA:16958"/>
    </physiologicalReaction>
</comment>
<comment type="catalytic activity">
    <molecule>Dual specificity calcium/calmodulin-dependent 3',5'-cyclic nucleotide phosphodiesterase 1A</molecule>
    <reaction evidence="2">
        <text>3',5'-cyclic AMP + H2O = AMP + H(+)</text>
        <dbReference type="Rhea" id="RHEA:25277"/>
        <dbReference type="ChEBI" id="CHEBI:15377"/>
        <dbReference type="ChEBI" id="CHEBI:15378"/>
        <dbReference type="ChEBI" id="CHEBI:58165"/>
        <dbReference type="ChEBI" id="CHEBI:456215"/>
    </reaction>
    <physiologicalReaction direction="left-to-right" evidence="2">
        <dbReference type="Rhea" id="RHEA:25278"/>
    </physiologicalReaction>
</comment>
<comment type="cofactor">
    <cofactor evidence="3">
        <name>Zn(2+)</name>
        <dbReference type="ChEBI" id="CHEBI:29105"/>
    </cofactor>
    <text evidence="3">Binds 2 divalent metal cations per subunit. Site 1 may preferentially bind zinc ions.</text>
</comment>
<comment type="cofactor">
    <cofactor evidence="3">
        <name>Mg(2+)</name>
        <dbReference type="ChEBI" id="CHEBI:18420"/>
    </cofactor>
    <text evidence="3">Binds 2 divalent metal cations per subunit. Site 2 has a preference for magnesium ions.</text>
</comment>
<comment type="activity regulation">
    <molecule>Dual specificity calcium/calmodulin-dependent 3',5'-cyclic nucleotide phosphodiesterase 1A</molecule>
    <text evidence="4">Type I PDE are activated by the binding of calmodulin in the presence of Ca(2+).</text>
</comment>
<comment type="activity regulation">
    <molecule>Isoform 1</molecule>
    <text evidence="4">Type I PDE are activated by the binding of calmodulin in the presence of Ca(2+).</text>
</comment>
<comment type="subunit">
    <text evidence="2 8">Homodimer (PubMed:8537356). Interacts with YWHAZ (By similarity).</text>
</comment>
<comment type="interaction">
    <interactant intactId="EBI-907809">
        <id>P14100</id>
    </interactant>
    <interactant intactId="EBI-908133">
        <id>P61602</id>
        <label>NCALD</label>
    </interactant>
    <organismsDiffer>false</organismsDiffer>
    <experiments>2</experiments>
</comment>
<comment type="interaction">
    <interactant intactId="EBI-907809">
        <id>P14100</id>
    </interactant>
    <interactant intactId="EBI-908193">
        <id>P84076</id>
        <label>Hpca</label>
    </interactant>
    <organismsDiffer>true</organismsDiffer>
    <experiments>2</experiments>
</comment>
<comment type="interaction">
    <interactant intactId="EBI-907809">
        <id>P14100</id>
    </interactant>
    <interactant intactId="EBI-907774">
        <id>P62168</id>
        <label>Ncs1</label>
    </interactant>
    <organismsDiffer>true</organismsDiffer>
    <experiments>2</experiments>
</comment>
<comment type="alternative products">
    <event type="alternative splicing"/>
    <isoform>
        <id>P14100-1</id>
        <name>2</name>
        <name evidence="11">PDE1A2</name>
        <name evidence="9">61 kDa Cam-PDE</name>
        <sequence type="displayed"/>
    </isoform>
    <isoform>
        <id>P14100-2</id>
        <name>1</name>
        <name evidence="11">PDE1A1</name>
        <name evidence="10">59-kDa CaM-PDE</name>
        <sequence type="described" ref="VSP_004546"/>
    </isoform>
</comment>
<comment type="similarity">
    <text evidence="13">Belongs to the cyclic nucleotide phosphodiesterase family. PDE1 subfamily.</text>
</comment>
<gene>
    <name evidence="2" type="primary">PDE1A</name>
</gene>